<comment type="function">
    <text evidence="1">Catalyzes the oxidation of 3-carboxy-2-hydroxy-4-methylpentanoate (3-isopropylmalate) to 3-carboxy-4-methyl-2-oxopentanoate. The product decarboxylates to 4-methyl-2 oxopentanoate.</text>
</comment>
<comment type="catalytic activity">
    <reaction evidence="1">
        <text>(2R,3S)-3-isopropylmalate + NAD(+) = 4-methyl-2-oxopentanoate + CO2 + NADH</text>
        <dbReference type="Rhea" id="RHEA:32271"/>
        <dbReference type="ChEBI" id="CHEBI:16526"/>
        <dbReference type="ChEBI" id="CHEBI:17865"/>
        <dbReference type="ChEBI" id="CHEBI:35121"/>
        <dbReference type="ChEBI" id="CHEBI:57540"/>
        <dbReference type="ChEBI" id="CHEBI:57945"/>
        <dbReference type="EC" id="1.1.1.85"/>
    </reaction>
</comment>
<comment type="cofactor">
    <cofactor evidence="1">
        <name>Mg(2+)</name>
        <dbReference type="ChEBI" id="CHEBI:18420"/>
    </cofactor>
    <cofactor evidence="1">
        <name>Mn(2+)</name>
        <dbReference type="ChEBI" id="CHEBI:29035"/>
    </cofactor>
    <text evidence="1">Binds 1 Mg(2+) or Mn(2+) ion per subunit.</text>
</comment>
<comment type="pathway">
    <text evidence="1">Amino-acid biosynthesis; L-leucine biosynthesis; L-leucine from 3-methyl-2-oxobutanoate: step 3/4.</text>
</comment>
<comment type="subunit">
    <text evidence="1">Homodimer.</text>
</comment>
<comment type="subcellular location">
    <subcellularLocation>
        <location evidence="1">Cytoplasm</location>
    </subcellularLocation>
</comment>
<comment type="similarity">
    <text evidence="1">Belongs to the isocitrate and isopropylmalate dehydrogenases family. LeuB type 1 subfamily.</text>
</comment>
<proteinExistence type="inferred from homology"/>
<name>LEU3_BUCML</name>
<dbReference type="EC" id="1.1.1.85" evidence="1"/>
<dbReference type="EMBL" id="AF197456">
    <property type="protein sequence ID" value="AAG31402.1"/>
    <property type="molecule type" value="Genomic_DNA"/>
</dbReference>
<dbReference type="UniPathway" id="UPA00048">
    <property type="reaction ID" value="UER00072"/>
</dbReference>
<dbReference type="GO" id="GO:0005829">
    <property type="term" value="C:cytosol"/>
    <property type="evidence" value="ECO:0007669"/>
    <property type="project" value="TreeGrafter"/>
</dbReference>
<dbReference type="GO" id="GO:0003862">
    <property type="term" value="F:3-isopropylmalate dehydrogenase activity"/>
    <property type="evidence" value="ECO:0007669"/>
    <property type="project" value="UniProtKB-UniRule"/>
</dbReference>
<dbReference type="GO" id="GO:0000287">
    <property type="term" value="F:magnesium ion binding"/>
    <property type="evidence" value="ECO:0007669"/>
    <property type="project" value="InterPro"/>
</dbReference>
<dbReference type="GO" id="GO:0051287">
    <property type="term" value="F:NAD binding"/>
    <property type="evidence" value="ECO:0007669"/>
    <property type="project" value="InterPro"/>
</dbReference>
<dbReference type="GO" id="GO:0009098">
    <property type="term" value="P:L-leucine biosynthetic process"/>
    <property type="evidence" value="ECO:0007669"/>
    <property type="project" value="UniProtKB-UniRule"/>
</dbReference>
<dbReference type="FunFam" id="3.40.718.10:FF:000006">
    <property type="entry name" value="3-isopropylmalate dehydrogenase"/>
    <property type="match status" value="1"/>
</dbReference>
<dbReference type="Gene3D" id="3.40.718.10">
    <property type="entry name" value="Isopropylmalate Dehydrogenase"/>
    <property type="match status" value="1"/>
</dbReference>
<dbReference type="HAMAP" id="MF_01033">
    <property type="entry name" value="LeuB_type1"/>
    <property type="match status" value="1"/>
</dbReference>
<dbReference type="InterPro" id="IPR019818">
    <property type="entry name" value="IsoCit/isopropylmalate_DH_CS"/>
</dbReference>
<dbReference type="InterPro" id="IPR024084">
    <property type="entry name" value="IsoPropMal-DH-like_dom"/>
</dbReference>
<dbReference type="InterPro" id="IPR004429">
    <property type="entry name" value="Isopropylmalate_DH"/>
</dbReference>
<dbReference type="NCBIfam" id="TIGR00169">
    <property type="entry name" value="leuB"/>
    <property type="match status" value="1"/>
</dbReference>
<dbReference type="PANTHER" id="PTHR42979">
    <property type="entry name" value="3-ISOPROPYLMALATE DEHYDROGENASE"/>
    <property type="match status" value="1"/>
</dbReference>
<dbReference type="PANTHER" id="PTHR42979:SF1">
    <property type="entry name" value="3-ISOPROPYLMALATE DEHYDROGENASE"/>
    <property type="match status" value="1"/>
</dbReference>
<dbReference type="Pfam" id="PF00180">
    <property type="entry name" value="Iso_dh"/>
    <property type="match status" value="1"/>
</dbReference>
<dbReference type="SMART" id="SM01329">
    <property type="entry name" value="Iso_dh"/>
    <property type="match status" value="1"/>
</dbReference>
<dbReference type="SUPFAM" id="SSF53659">
    <property type="entry name" value="Isocitrate/Isopropylmalate dehydrogenase-like"/>
    <property type="match status" value="1"/>
</dbReference>
<dbReference type="PROSITE" id="PS00470">
    <property type="entry name" value="IDH_IMDH"/>
    <property type="match status" value="1"/>
</dbReference>
<protein>
    <recommendedName>
        <fullName evidence="1">3-isopropylmalate dehydrogenase</fullName>
        <ecNumber evidence="1">1.1.1.85</ecNumber>
    </recommendedName>
    <alternativeName>
        <fullName evidence="1">3-IPM-DH</fullName>
    </alternativeName>
    <alternativeName>
        <fullName evidence="1">Beta-IPM dehydrogenase</fullName>
        <shortName evidence="1">IMDH</shortName>
    </alternativeName>
</protein>
<feature type="chain" id="PRO_0000083658" description="3-isopropylmalate dehydrogenase">
    <location>
        <begin position="1"/>
        <end position="365"/>
    </location>
</feature>
<feature type="binding site" evidence="1">
    <location>
        <begin position="78"/>
        <end position="91"/>
    </location>
    <ligand>
        <name>NAD(+)</name>
        <dbReference type="ChEBI" id="CHEBI:57540"/>
    </ligand>
</feature>
<feature type="binding site" evidence="1">
    <location>
        <position position="99"/>
    </location>
    <ligand>
        <name>substrate</name>
    </ligand>
</feature>
<feature type="binding site" evidence="1">
    <location>
        <position position="109"/>
    </location>
    <ligand>
        <name>substrate</name>
    </ligand>
</feature>
<feature type="binding site" evidence="1">
    <location>
        <position position="139"/>
    </location>
    <ligand>
        <name>substrate</name>
    </ligand>
</feature>
<feature type="binding site" evidence="1">
    <location>
        <position position="228"/>
    </location>
    <ligand>
        <name>Mg(2+)</name>
        <dbReference type="ChEBI" id="CHEBI:18420"/>
    </ligand>
</feature>
<feature type="binding site" evidence="1">
    <location>
        <position position="228"/>
    </location>
    <ligand>
        <name>substrate</name>
    </ligand>
</feature>
<feature type="binding site" evidence="1">
    <location>
        <position position="252"/>
    </location>
    <ligand>
        <name>Mg(2+)</name>
        <dbReference type="ChEBI" id="CHEBI:18420"/>
    </ligand>
</feature>
<feature type="binding site" evidence="1">
    <location>
        <position position="256"/>
    </location>
    <ligand>
        <name>Mg(2+)</name>
        <dbReference type="ChEBI" id="CHEBI:18420"/>
    </ligand>
</feature>
<feature type="binding site" evidence="1">
    <location>
        <begin position="286"/>
        <end position="298"/>
    </location>
    <ligand>
        <name>NAD(+)</name>
        <dbReference type="ChEBI" id="CHEBI:57540"/>
    </ligand>
</feature>
<feature type="site" description="Important for catalysis" evidence="1">
    <location>
        <position position="146"/>
    </location>
</feature>
<feature type="site" description="Important for catalysis" evidence="1">
    <location>
        <position position="196"/>
    </location>
</feature>
<geneLocation type="plasmid">
    <name>pLeu</name>
    <name>pBAp1</name>
</geneLocation>
<accession>Q9EVG3</accession>
<reference key="1">
    <citation type="journal article" date="2001" name="J. Bacteriol.">
        <title>Vertical transmission of biosynthetic plasmids in aphid endosymbionts (Buchnera).</title>
        <authorList>
            <person name="Wernegreen J.J."/>
            <person name="Moran N.A."/>
        </authorList>
    </citation>
    <scope>NUCLEOTIDE SEQUENCE [GENOMIC DNA]</scope>
</reference>
<keyword id="KW-0028">Amino-acid biosynthesis</keyword>
<keyword id="KW-0100">Branched-chain amino acid biosynthesis</keyword>
<keyword id="KW-0963">Cytoplasm</keyword>
<keyword id="KW-0432">Leucine biosynthesis</keyword>
<keyword id="KW-0460">Magnesium</keyword>
<keyword id="KW-0464">Manganese</keyword>
<keyword id="KW-0479">Metal-binding</keyword>
<keyword id="KW-0520">NAD</keyword>
<keyword id="KW-0560">Oxidoreductase</keyword>
<keyword id="KW-0614">Plasmid</keyword>
<evidence type="ECO:0000255" key="1">
    <source>
        <dbReference type="HAMAP-Rule" id="MF_01033"/>
    </source>
</evidence>
<organism>
    <name type="scientific">Buchnera aphidicola subsp. Macrosiphoniella ludovicianae</name>
    <dbReference type="NCBI Taxonomy" id="118105"/>
    <lineage>
        <taxon>Bacteria</taxon>
        <taxon>Pseudomonadati</taxon>
        <taxon>Pseudomonadota</taxon>
        <taxon>Gammaproteobacteria</taxon>
        <taxon>Enterobacterales</taxon>
        <taxon>Erwiniaceae</taxon>
        <taxon>Buchnera</taxon>
    </lineage>
</organism>
<gene>
    <name evidence="1" type="primary">leuB</name>
</gene>
<sequence length="365" mass="40966">MKKQYRIAVLPGDGIGPEVMKEAYKILKILQNYFSLHIEIKEFNIGGIALDKEGVALPKDTLLGCENSDAILFGSVGGKKWNNLPIEKRPERASLLPLRKHFNLFYNLRPAKLYSELRFLSPLRSKTXIKNGFDILCIRELTGGIYFGEPRGRLKKNNIEYAFDTEVYYDYEINRIAHVAFQLARTRKNKVCSIDKANVLNSSLLWREIVTKVSKNYPDVHLSHLYIDNATMQIIQNPNQFDILLCSNLFGDILSDECAIITGSIGMLPSASLNEKNFGLYEPAGGSAPDIAGKNIANPIAQILSLSMLVRYGMNLKKIANKIDQSVISVLKKGYRTFDISDDNNXFLKTNEMGDVIADALINGE</sequence>